<organism>
    <name type="scientific">African swine fever virus (isolate Tick/South Africa/Pretoriuskop Pr4/1996)</name>
    <name type="common">ASFV</name>
    <dbReference type="NCBI Taxonomy" id="561443"/>
    <lineage>
        <taxon>Viruses</taxon>
        <taxon>Varidnaviria</taxon>
        <taxon>Bamfordvirae</taxon>
        <taxon>Nucleocytoviricota</taxon>
        <taxon>Pokkesviricetes</taxon>
        <taxon>Asfuvirales</taxon>
        <taxon>Asfarviridae</taxon>
        <taxon>Asfivirus</taxon>
        <taxon>African swine fever virus</taxon>
    </lineage>
</organism>
<gene>
    <name type="ordered locus">Pret-136</name>
</gene>
<organismHost>
    <name type="scientific">Ornithodoros</name>
    <name type="common">relapsing fever ticks</name>
    <dbReference type="NCBI Taxonomy" id="6937"/>
</organismHost>
<organismHost>
    <name type="scientific">Phacochoerus aethiopicus</name>
    <name type="common">Warthog</name>
    <dbReference type="NCBI Taxonomy" id="85517"/>
</organismHost>
<organismHost>
    <name type="scientific">Phacochoerus africanus</name>
    <name type="common">Warthog</name>
    <dbReference type="NCBI Taxonomy" id="41426"/>
</organismHost>
<organismHost>
    <name type="scientific">Potamochoerus larvatus</name>
    <name type="common">Bushpig</name>
    <dbReference type="NCBI Taxonomy" id="273792"/>
</organismHost>
<organismHost>
    <name type="scientific">Sus scrofa</name>
    <name type="common">Pig</name>
    <dbReference type="NCBI Taxonomy" id="9823"/>
</organismHost>
<reference key="1">
    <citation type="submission" date="2003-03" db="EMBL/GenBank/DDBJ databases">
        <title>African swine fever virus genomes.</title>
        <authorList>
            <person name="Kutish G.F."/>
            <person name="Rock D.L."/>
        </authorList>
    </citation>
    <scope>NUCLEOTIDE SEQUENCE [GENOMIC DNA]</scope>
</reference>
<protein>
    <recommendedName>
        <fullName>NifS-like protein</fullName>
    </recommendedName>
</protein>
<sequence length="387" mass="43008">MASILTLDGLYAEVPKFLPEALREGCAGKNPLSFYIQQILNLMGCDGNEYHVLFTSSSEEANTHMIMAAVRRHLLRTQQRPHVIIGAGEPPSITECVKALAQEKRCVYTIIPLKNFEIDPVAVYDAIQSNTCLACISGTNAVVKTFNKLQDISKVLRGIPLHSEVSDLVYQGCIKQNPPADSFSINSLYGFLGVGILGMKKKVMQGLGPLIFGGGLRGGSPNIPGIHAMYRTLTQQRPSIKKINTIHKLFMKTLKKHQHVYLPIGGVSAEDMSTKDMSTKDIPSTDMLVGPKGLPGYILFSVGHRAEELQKKIFTKFNIKIGRIVDLQEILFRIKIPQKYWETLLFIQLRDNLTKEDIKRVMVVLMHLDTITPRGSLPPPSYSSSFS</sequence>
<comment type="cofactor">
    <cofactor evidence="1">
        <name>pyridoxal 5'-phosphate</name>
        <dbReference type="ChEBI" id="CHEBI:597326"/>
    </cofactor>
</comment>
<comment type="subcellular location">
    <subcellularLocation>
        <location evidence="2">Virion</location>
    </subcellularLocation>
</comment>
<comment type="induction">
    <text evidence="3">Expressed in the late phase of the viral replicative cycle.</text>
</comment>
<comment type="similarity">
    <text evidence="3">Belongs to the class-V pyridoxal-phosphate-dependent aminotransferase family. NifS/IscS subfamily.</text>
</comment>
<comment type="caution">
    <text evidence="3">Although related to the NifS/IscS subfamily, lacks the conserved active site, suggesting it has no transferase activity.</text>
</comment>
<evidence type="ECO:0000250" key="1">
    <source>
        <dbReference type="UniProtKB" id="P0A6B9"/>
    </source>
</evidence>
<evidence type="ECO:0000250" key="2">
    <source>
        <dbReference type="UniProtKB" id="Q65192"/>
    </source>
</evidence>
<evidence type="ECO:0000305" key="3"/>
<feature type="chain" id="PRO_0000373144" description="NifS-like protein">
    <location>
        <begin position="1"/>
        <end position="387"/>
    </location>
</feature>
<feature type="binding site" evidence="1">
    <location>
        <begin position="58"/>
        <end position="59"/>
    </location>
    <ligand>
        <name>pyridoxal 5'-phosphate</name>
        <dbReference type="ChEBI" id="CHEBI:597326"/>
    </ligand>
</feature>
<feature type="binding site" evidence="1">
    <location>
        <begin position="184"/>
        <end position="186"/>
    </location>
    <ligand>
        <name>pyridoxal 5'-phosphate</name>
        <dbReference type="ChEBI" id="CHEBI:597326"/>
    </ligand>
</feature>
<name>NIFSL_ASFP4</name>
<accession>P0C9C9</accession>
<proteinExistence type="inferred from homology"/>
<dbReference type="EMBL" id="AY261363">
    <property type="status" value="NOT_ANNOTATED_CDS"/>
    <property type="molecule type" value="Genomic_DNA"/>
</dbReference>
<dbReference type="SMR" id="P0C9C9"/>
<dbReference type="Proteomes" id="UP000000859">
    <property type="component" value="Segment"/>
</dbReference>
<dbReference type="GO" id="GO:0044423">
    <property type="term" value="C:virion component"/>
    <property type="evidence" value="ECO:0007669"/>
    <property type="project" value="UniProtKB-KW"/>
</dbReference>
<dbReference type="Gene3D" id="3.90.1150.10">
    <property type="entry name" value="Aspartate Aminotransferase, domain 1"/>
    <property type="match status" value="1"/>
</dbReference>
<dbReference type="Gene3D" id="3.40.640.10">
    <property type="entry name" value="Type I PLP-dependent aspartate aminotransferase-like (Major domain)"/>
    <property type="match status" value="1"/>
</dbReference>
<dbReference type="InterPro" id="IPR000192">
    <property type="entry name" value="Aminotrans_V_dom"/>
</dbReference>
<dbReference type="InterPro" id="IPR015424">
    <property type="entry name" value="PyrdxlP-dep_Trfase"/>
</dbReference>
<dbReference type="InterPro" id="IPR015421">
    <property type="entry name" value="PyrdxlP-dep_Trfase_major"/>
</dbReference>
<dbReference type="InterPro" id="IPR015422">
    <property type="entry name" value="PyrdxlP-dep_Trfase_small"/>
</dbReference>
<dbReference type="PANTHER" id="PTHR11601:SF34">
    <property type="entry name" value="CYSTEINE DESULFURASE"/>
    <property type="match status" value="1"/>
</dbReference>
<dbReference type="PANTHER" id="PTHR11601">
    <property type="entry name" value="CYSTEINE DESULFURYLASE FAMILY MEMBER"/>
    <property type="match status" value="1"/>
</dbReference>
<dbReference type="Pfam" id="PF00266">
    <property type="entry name" value="Aminotran_5"/>
    <property type="match status" value="1"/>
</dbReference>
<dbReference type="SUPFAM" id="SSF53383">
    <property type="entry name" value="PLP-dependent transferases"/>
    <property type="match status" value="1"/>
</dbReference>
<keyword id="KW-0426">Late protein</keyword>
<keyword id="KW-0946">Virion</keyword>